<proteinExistence type="inferred from homology"/>
<evidence type="ECO:0000250" key="1">
    <source>
        <dbReference type="UniProtKB" id="P38244"/>
    </source>
</evidence>
<evidence type="ECO:0000250" key="2">
    <source>
        <dbReference type="UniProtKB" id="P80561"/>
    </source>
</evidence>
<evidence type="ECO:0000255" key="3"/>
<evidence type="ECO:0000255" key="4">
    <source>
        <dbReference type="PROSITE-ProRule" id="PRU00498"/>
    </source>
</evidence>
<evidence type="ECO:0000256" key="5">
    <source>
        <dbReference type="SAM" id="MobiDB-lite"/>
    </source>
</evidence>
<evidence type="ECO:0000305" key="6"/>
<comment type="function">
    <text evidence="1">May be involved in vacuolar sorting and osmoregulation.</text>
</comment>
<comment type="cofactor">
    <cofactor evidence="2">
        <name>Zn(2+)</name>
        <dbReference type="ChEBI" id="CHEBI:29105"/>
    </cofactor>
    <text evidence="2">Binds 2 Zn(2+) ions per subunit.</text>
</comment>
<comment type="subcellular location">
    <subcellularLocation>
        <location evidence="1">Vacuole membrane</location>
        <topology evidence="3">Multi-pass membrane protein</topology>
    </subcellularLocation>
</comment>
<comment type="similarity">
    <text evidence="6">Belongs to the peptidase M28 family.</text>
</comment>
<feature type="chain" id="PRO_0000411700" description="Vacuolar membrane protease">
    <location>
        <begin position="1"/>
        <end position="878"/>
    </location>
</feature>
<feature type="topological domain" description="Cytoplasmic" evidence="1">
    <location>
        <begin position="1"/>
        <end position="16"/>
    </location>
</feature>
<feature type="transmembrane region" description="Helical; Name=1" evidence="3">
    <location>
        <begin position="17"/>
        <end position="37"/>
    </location>
</feature>
<feature type="topological domain" description="Vacuolar" evidence="1">
    <location>
        <begin position="38"/>
        <end position="390"/>
    </location>
</feature>
<feature type="transmembrane region" description="Helical; Name=2" evidence="3">
    <location>
        <begin position="391"/>
        <end position="411"/>
    </location>
</feature>
<feature type="topological domain" description="Cytoplasmic" evidence="1">
    <location>
        <begin position="412"/>
        <end position="442"/>
    </location>
</feature>
<feature type="transmembrane region" description="Helical; Name=3" evidence="3">
    <location>
        <begin position="443"/>
        <end position="463"/>
    </location>
</feature>
<feature type="topological domain" description="Vacuolar" evidence="1">
    <location>
        <begin position="464"/>
        <end position="473"/>
    </location>
</feature>
<feature type="transmembrane region" description="Helical; Name=4" evidence="3">
    <location>
        <begin position="474"/>
        <end position="494"/>
    </location>
</feature>
<feature type="topological domain" description="Cytoplasmic" evidence="1">
    <location>
        <begin position="495"/>
        <end position="508"/>
    </location>
</feature>
<feature type="transmembrane region" description="Helical; Name=5" evidence="3">
    <location>
        <begin position="509"/>
        <end position="529"/>
    </location>
</feature>
<feature type="topological domain" description="Vacuolar" evidence="1">
    <location>
        <begin position="530"/>
        <end position="533"/>
    </location>
</feature>
<feature type="transmembrane region" description="Helical; Name=6" evidence="3">
    <location>
        <begin position="534"/>
        <end position="554"/>
    </location>
</feature>
<feature type="topological domain" description="Cytoplasmic" evidence="1">
    <location>
        <begin position="555"/>
        <end position="659"/>
    </location>
</feature>
<feature type="transmembrane region" description="Helical; Name=7" evidence="3">
    <location>
        <begin position="660"/>
        <end position="680"/>
    </location>
</feature>
<feature type="topological domain" description="Vacuolar" evidence="1">
    <location>
        <begin position="681"/>
        <end position="693"/>
    </location>
</feature>
<feature type="transmembrane region" description="Helical; Name=8" evidence="3">
    <location>
        <begin position="694"/>
        <end position="714"/>
    </location>
</feature>
<feature type="topological domain" description="Cytoplasmic" evidence="1">
    <location>
        <begin position="715"/>
        <end position="721"/>
    </location>
</feature>
<feature type="transmembrane region" description="Helical; Name=9" evidence="3">
    <location>
        <begin position="722"/>
        <end position="742"/>
    </location>
</feature>
<feature type="topological domain" description="Vacuolar" evidence="1">
    <location>
        <begin position="743"/>
        <end position="878"/>
    </location>
</feature>
<feature type="region of interest" description="Disordered" evidence="5">
    <location>
        <begin position="577"/>
        <end position="611"/>
    </location>
</feature>
<feature type="compositionally biased region" description="Low complexity" evidence="5">
    <location>
        <begin position="577"/>
        <end position="590"/>
    </location>
</feature>
<feature type="compositionally biased region" description="Acidic residues" evidence="5">
    <location>
        <begin position="591"/>
        <end position="603"/>
    </location>
</feature>
<feature type="active site" description="Proton acceptor" evidence="2">
    <location>
        <position position="220"/>
    </location>
</feature>
<feature type="binding site" evidence="2">
    <location>
        <position position="174"/>
    </location>
    <ligand>
        <name>Zn(2+)</name>
        <dbReference type="ChEBI" id="CHEBI:29105"/>
        <label>1</label>
        <note>catalytic</note>
    </ligand>
</feature>
<feature type="binding site" evidence="2">
    <location>
        <position position="186"/>
    </location>
    <ligand>
        <name>Zn(2+)</name>
        <dbReference type="ChEBI" id="CHEBI:29105"/>
        <label>1</label>
        <note>catalytic</note>
    </ligand>
</feature>
<feature type="binding site" evidence="2">
    <location>
        <position position="186"/>
    </location>
    <ligand>
        <name>Zn(2+)</name>
        <dbReference type="ChEBI" id="CHEBI:29105"/>
        <label>2</label>
        <note>catalytic</note>
    </ligand>
</feature>
<feature type="binding site" evidence="2">
    <location>
        <position position="221"/>
    </location>
    <ligand>
        <name>Zn(2+)</name>
        <dbReference type="ChEBI" id="CHEBI:29105"/>
        <label>2</label>
        <note>catalytic</note>
    </ligand>
</feature>
<feature type="binding site" evidence="2">
    <location>
        <position position="246"/>
    </location>
    <ligand>
        <name>Zn(2+)</name>
        <dbReference type="ChEBI" id="CHEBI:29105"/>
        <label>1</label>
        <note>catalytic</note>
    </ligand>
</feature>
<feature type="binding site" evidence="2">
    <location>
        <position position="319"/>
    </location>
    <ligand>
        <name>Zn(2+)</name>
        <dbReference type="ChEBI" id="CHEBI:29105"/>
        <label>2</label>
        <note>catalytic</note>
    </ligand>
</feature>
<feature type="site" description="Transition state stabilizer" evidence="2">
    <location>
        <position position="318"/>
    </location>
</feature>
<feature type="glycosylation site" description="N-linked (GlcNAc...) asparagine" evidence="4">
    <location>
        <position position="53"/>
    </location>
</feature>
<feature type="glycosylation site" description="N-linked (GlcNAc...) asparagine" evidence="4">
    <location>
        <position position="119"/>
    </location>
</feature>
<organism>
    <name type="scientific">Aspergillus flavus (strain ATCC 200026 / FGSC A1120 / IAM 13836 / NRRL 3357 / JCM 12722 / SRRC 167)</name>
    <dbReference type="NCBI Taxonomy" id="332952"/>
    <lineage>
        <taxon>Eukaryota</taxon>
        <taxon>Fungi</taxon>
        <taxon>Dikarya</taxon>
        <taxon>Ascomycota</taxon>
        <taxon>Pezizomycotina</taxon>
        <taxon>Eurotiomycetes</taxon>
        <taxon>Eurotiomycetidae</taxon>
        <taxon>Eurotiales</taxon>
        <taxon>Aspergillaceae</taxon>
        <taxon>Aspergillus</taxon>
        <taxon>Aspergillus subgen. Circumdati</taxon>
    </lineage>
</organism>
<keyword id="KW-0325">Glycoprotein</keyword>
<keyword id="KW-0378">Hydrolase</keyword>
<keyword id="KW-0472">Membrane</keyword>
<keyword id="KW-0479">Metal-binding</keyword>
<keyword id="KW-0482">Metalloprotease</keyword>
<keyword id="KW-0645">Protease</keyword>
<keyword id="KW-0812">Transmembrane</keyword>
<keyword id="KW-1133">Transmembrane helix</keyword>
<keyword id="KW-0926">Vacuole</keyword>
<keyword id="KW-0862">Zinc</keyword>
<protein>
    <recommendedName>
        <fullName evidence="1">Vacuolar membrane protease</fullName>
        <ecNumber evidence="6">3.4.-.-</ecNumber>
    </recommendedName>
    <alternativeName>
        <fullName evidence="1">FXNA-related family protease 1</fullName>
    </alternativeName>
</protein>
<name>PFF1_ASPFN</name>
<accession>B8NSP6</accession>
<sequence>MASLRLPRANPLAFTRWPVTVITAIVYLALLIPLLVVHHVVPSAPSSPPSGLNISEAWADLQVLTNGFHPYNSRRNDVIHSWLLRRINEILDSTPLEQEYRALDEEKPDVFVFDDVYSNLTTYGGTLKDADLGVYFEGTNVIVYIRGWEDDTEHWWEAPNGVPTSRGGVLVNSHYDSVSTGFGATDDGVGVVTCLQLVKYFTTPGHAPRRGLVVLFNNGEEDFLNGARVYSQHPISKLPHTFLNLEGAGAGGRATLFRSSDFEVTGPYMRSPHPFGSVLSANGFDTGLIASQTDYVIFQGNMGLRGLDVAFMEPRARYHTNQDDTRHTSKDSVWHMLSAAVATTEGLVSDSTDRFDGAPNTDGGVPSGSGSQAVWFDLFGSTFVLFQLHTLFALLVTLLIVGPLTLLFTSIALTKADKMYLFRSSAKSEDRLDVVPLQGLRGFFRFPFLFGIPTVVTVGLAYLVTKVNPYIIHSSAYAVWSMMVAAWVFLAWFVSRVADFARPSAFHRIYTLTWMYVLSWVSAVIATVYANQRGLAGGYFIFFFHAGIFLATWISYLELFALPSKTEYANQLRSVSGRASGHGSRRGTTSGEDDGEEAEEEPTESTSLLGSGQRTTFANYVRVGGDNHAVAEEEVIDPNVYGREQAWSYALPKWTWGLQLLLTAPITLIMVGPLALLTISAISQTGQDGGHPLFAYVAIAIFTTIMLTPLLPFIHRYTYHVPLFLLAVFLGTLIYNLVAFPFSDSNRLKLYYVQEVDLDTGVNSATFAGLSPFVKDVSQELPSAAGQTVSCEWHTKRRNLLSCSWEGIAPQPVEGDHPMKDWGALKGNVVCLWSDHNQPGVLPALDEAIQFLPVWAAVTKGSDGLVEGRRAFEIGNDD</sequence>
<reference key="1">
    <citation type="journal article" date="2015" name="Genome Announc.">
        <title>Genome sequence of Aspergillus flavus NRRL 3357, a strain that causes aflatoxin contamination of food and feed.</title>
        <authorList>
            <person name="Nierman W.C."/>
            <person name="Yu J."/>
            <person name="Fedorova-Abrams N.D."/>
            <person name="Losada L."/>
            <person name="Cleveland T.E."/>
            <person name="Bhatnagar D."/>
            <person name="Bennett J.W."/>
            <person name="Dean R."/>
            <person name="Payne G.A."/>
        </authorList>
    </citation>
    <scope>NUCLEOTIDE SEQUENCE [LARGE SCALE GENOMIC DNA]</scope>
    <source>
        <strain>ATCC 200026 / FGSC A1120 / IAM 13836 / NRRL 3357 / JCM 12722 / SRRC 167</strain>
    </source>
</reference>
<gene>
    <name type="ORF">AFLA_049970</name>
</gene>
<dbReference type="EC" id="3.4.-.-" evidence="6"/>
<dbReference type="EMBL" id="EQ963483">
    <property type="protein sequence ID" value="EED46944.1"/>
    <property type="molecule type" value="Genomic_DNA"/>
</dbReference>
<dbReference type="RefSeq" id="XP_002383124.1">
    <property type="nucleotide sequence ID" value="XM_002383083.1"/>
</dbReference>
<dbReference type="SMR" id="B8NSP6"/>
<dbReference type="STRING" id="332952.B8NSP6"/>
<dbReference type="EnsemblFungi" id="EED46944">
    <property type="protein sequence ID" value="EED46944"/>
    <property type="gene ID" value="AFLA_049970"/>
</dbReference>
<dbReference type="VEuPathDB" id="FungiDB:AFLA_010875"/>
<dbReference type="eggNOG" id="KOG2194">
    <property type="taxonomic scope" value="Eukaryota"/>
</dbReference>
<dbReference type="HOGENOM" id="CLU_006412_1_0_1"/>
<dbReference type="OMA" id="TPWPVTI"/>
<dbReference type="GO" id="GO:0005774">
    <property type="term" value="C:vacuolar membrane"/>
    <property type="evidence" value="ECO:0007669"/>
    <property type="project" value="UniProtKB-SubCell"/>
</dbReference>
<dbReference type="GO" id="GO:0046872">
    <property type="term" value="F:metal ion binding"/>
    <property type="evidence" value="ECO:0007669"/>
    <property type="project" value="UniProtKB-KW"/>
</dbReference>
<dbReference type="GO" id="GO:0008235">
    <property type="term" value="F:metalloexopeptidase activity"/>
    <property type="evidence" value="ECO:0007669"/>
    <property type="project" value="InterPro"/>
</dbReference>
<dbReference type="GO" id="GO:0006508">
    <property type="term" value="P:proteolysis"/>
    <property type="evidence" value="ECO:0007669"/>
    <property type="project" value="UniProtKB-KW"/>
</dbReference>
<dbReference type="CDD" id="cd03875">
    <property type="entry name" value="M28_Fxna_like"/>
    <property type="match status" value="1"/>
</dbReference>
<dbReference type="FunFam" id="3.40.630.10:FF:000057">
    <property type="entry name" value="Vacuolar membrane protease"/>
    <property type="match status" value="1"/>
</dbReference>
<dbReference type="Gene3D" id="3.40.630.10">
    <property type="entry name" value="Zn peptidases"/>
    <property type="match status" value="1"/>
</dbReference>
<dbReference type="InterPro" id="IPR048024">
    <property type="entry name" value="Fxna-like_M28_dom"/>
</dbReference>
<dbReference type="InterPro" id="IPR045175">
    <property type="entry name" value="M28_fam"/>
</dbReference>
<dbReference type="InterPro" id="IPR007484">
    <property type="entry name" value="Peptidase_M28"/>
</dbReference>
<dbReference type="InterPro" id="IPR053975">
    <property type="entry name" value="PFF1_C"/>
</dbReference>
<dbReference type="InterPro" id="IPR053976">
    <property type="entry name" value="PFF1_TM"/>
</dbReference>
<dbReference type="PANTHER" id="PTHR12147">
    <property type="entry name" value="METALLOPEPTIDASE M28 FAMILY MEMBER"/>
    <property type="match status" value="1"/>
</dbReference>
<dbReference type="PANTHER" id="PTHR12147:SF58">
    <property type="entry name" value="VACUOLAR MEMBRANE PROTEASE"/>
    <property type="match status" value="1"/>
</dbReference>
<dbReference type="Pfam" id="PF04389">
    <property type="entry name" value="Peptidase_M28"/>
    <property type="match status" value="1"/>
</dbReference>
<dbReference type="Pfam" id="PF22250">
    <property type="entry name" value="PFF1_C"/>
    <property type="match status" value="1"/>
</dbReference>
<dbReference type="Pfam" id="PF22251">
    <property type="entry name" value="PFF1_TM"/>
    <property type="match status" value="1"/>
</dbReference>
<dbReference type="SUPFAM" id="SSF53187">
    <property type="entry name" value="Zn-dependent exopeptidases"/>
    <property type="match status" value="1"/>
</dbReference>